<keyword id="KW-0963">Cytoplasm</keyword>
<keyword id="KW-0648">Protein biosynthesis</keyword>
<keyword id="KW-1185">Reference proteome</keyword>
<proteinExistence type="inferred from homology"/>
<reference key="1">
    <citation type="journal article" date="2003" name="Nature">
        <title>Genome divergence in two Prochlorococcus ecotypes reflects oceanic niche differentiation.</title>
        <authorList>
            <person name="Rocap G."/>
            <person name="Larimer F.W."/>
            <person name="Lamerdin J.E."/>
            <person name="Malfatti S."/>
            <person name="Chain P."/>
            <person name="Ahlgren N.A."/>
            <person name="Arellano A."/>
            <person name="Coleman M."/>
            <person name="Hauser L."/>
            <person name="Hess W.R."/>
            <person name="Johnson Z.I."/>
            <person name="Land M.L."/>
            <person name="Lindell D."/>
            <person name="Post A.F."/>
            <person name="Regala W."/>
            <person name="Shah M."/>
            <person name="Shaw S.L."/>
            <person name="Steglich C."/>
            <person name="Sullivan M.B."/>
            <person name="Ting C.S."/>
            <person name="Tolonen A."/>
            <person name="Webb E.A."/>
            <person name="Zinser E.R."/>
            <person name="Chisholm S.W."/>
        </authorList>
    </citation>
    <scope>NUCLEOTIDE SEQUENCE [LARGE SCALE GENOMIC DNA]</scope>
    <source>
        <strain>MIT 9313</strain>
    </source>
</reference>
<sequence length="182" mass="20476">MSNQELKDNMHKSVEATQRNFATIRTGRANPSLLDRINVEYYGTETPLKSLATISTPDSQTIAIQPFDNGSMGLIEKAIATSDLGLTPNNDGKIIRINVPPLTEERRKEFCKLAARYAEEGKVALRNIRRDAIDKVKKLEKDAELSKDQSHDEQDGIQKLTDTFITEIEKYLAEKEADILKV</sequence>
<name>RRF_PROMM</name>
<protein>
    <recommendedName>
        <fullName evidence="1">Ribosome-recycling factor</fullName>
        <shortName evidence="1">RRF</shortName>
    </recommendedName>
    <alternativeName>
        <fullName evidence="1">Ribosome-releasing factor</fullName>
    </alternativeName>
</protein>
<comment type="function">
    <text evidence="1">Responsible for the release of ribosomes from messenger RNA at the termination of protein biosynthesis. May increase the efficiency of translation by recycling ribosomes from one round of translation to another.</text>
</comment>
<comment type="subcellular location">
    <subcellularLocation>
        <location evidence="1">Cytoplasm</location>
    </subcellularLocation>
</comment>
<comment type="similarity">
    <text evidence="1">Belongs to the RRF family.</text>
</comment>
<organism>
    <name type="scientific">Prochlorococcus marinus (strain MIT 9313)</name>
    <dbReference type="NCBI Taxonomy" id="74547"/>
    <lineage>
        <taxon>Bacteria</taxon>
        <taxon>Bacillati</taxon>
        <taxon>Cyanobacteriota</taxon>
        <taxon>Cyanophyceae</taxon>
        <taxon>Synechococcales</taxon>
        <taxon>Prochlorococcaceae</taxon>
        <taxon>Prochlorococcus</taxon>
    </lineage>
</organism>
<evidence type="ECO:0000255" key="1">
    <source>
        <dbReference type="HAMAP-Rule" id="MF_00040"/>
    </source>
</evidence>
<gene>
    <name evidence="1" type="primary">frr</name>
    <name type="ordered locus">PMT_1245</name>
</gene>
<feature type="chain" id="PRO_0000167516" description="Ribosome-recycling factor">
    <location>
        <begin position="1"/>
        <end position="182"/>
    </location>
</feature>
<accession>Q7V6C1</accession>
<dbReference type="EMBL" id="BX548175">
    <property type="protein sequence ID" value="CAE21420.1"/>
    <property type="molecule type" value="Genomic_DNA"/>
</dbReference>
<dbReference type="RefSeq" id="WP_011130614.1">
    <property type="nucleotide sequence ID" value="NC_005071.1"/>
</dbReference>
<dbReference type="SMR" id="Q7V6C1"/>
<dbReference type="KEGG" id="pmt:PMT_1245"/>
<dbReference type="eggNOG" id="COG0233">
    <property type="taxonomic scope" value="Bacteria"/>
</dbReference>
<dbReference type="HOGENOM" id="CLU_073981_2_0_3"/>
<dbReference type="OrthoDB" id="9804006at2"/>
<dbReference type="Proteomes" id="UP000001423">
    <property type="component" value="Chromosome"/>
</dbReference>
<dbReference type="GO" id="GO:0005737">
    <property type="term" value="C:cytoplasm"/>
    <property type="evidence" value="ECO:0007669"/>
    <property type="project" value="UniProtKB-SubCell"/>
</dbReference>
<dbReference type="GO" id="GO:0043023">
    <property type="term" value="F:ribosomal large subunit binding"/>
    <property type="evidence" value="ECO:0007669"/>
    <property type="project" value="TreeGrafter"/>
</dbReference>
<dbReference type="GO" id="GO:0006415">
    <property type="term" value="P:translational termination"/>
    <property type="evidence" value="ECO:0007669"/>
    <property type="project" value="UniProtKB-UniRule"/>
</dbReference>
<dbReference type="CDD" id="cd00520">
    <property type="entry name" value="RRF"/>
    <property type="match status" value="1"/>
</dbReference>
<dbReference type="FunFam" id="1.10.132.20:FF:000001">
    <property type="entry name" value="Ribosome-recycling factor"/>
    <property type="match status" value="1"/>
</dbReference>
<dbReference type="FunFam" id="3.30.1360.40:FF:000001">
    <property type="entry name" value="Ribosome-recycling factor"/>
    <property type="match status" value="1"/>
</dbReference>
<dbReference type="Gene3D" id="3.30.1360.40">
    <property type="match status" value="1"/>
</dbReference>
<dbReference type="Gene3D" id="1.10.132.20">
    <property type="entry name" value="Ribosome-recycling factor"/>
    <property type="match status" value="1"/>
</dbReference>
<dbReference type="HAMAP" id="MF_00040">
    <property type="entry name" value="RRF"/>
    <property type="match status" value="1"/>
</dbReference>
<dbReference type="InterPro" id="IPR002661">
    <property type="entry name" value="Ribosome_recyc_fac"/>
</dbReference>
<dbReference type="InterPro" id="IPR023584">
    <property type="entry name" value="Ribosome_recyc_fac_dom"/>
</dbReference>
<dbReference type="InterPro" id="IPR036191">
    <property type="entry name" value="RRF_sf"/>
</dbReference>
<dbReference type="NCBIfam" id="TIGR00496">
    <property type="entry name" value="frr"/>
    <property type="match status" value="1"/>
</dbReference>
<dbReference type="PANTHER" id="PTHR20982:SF3">
    <property type="entry name" value="MITOCHONDRIAL RIBOSOME RECYCLING FACTOR PSEUDO 1"/>
    <property type="match status" value="1"/>
</dbReference>
<dbReference type="PANTHER" id="PTHR20982">
    <property type="entry name" value="RIBOSOME RECYCLING FACTOR"/>
    <property type="match status" value="1"/>
</dbReference>
<dbReference type="Pfam" id="PF01765">
    <property type="entry name" value="RRF"/>
    <property type="match status" value="1"/>
</dbReference>
<dbReference type="SUPFAM" id="SSF55194">
    <property type="entry name" value="Ribosome recycling factor, RRF"/>
    <property type="match status" value="1"/>
</dbReference>